<evidence type="ECO:0000255" key="1">
    <source>
        <dbReference type="HAMAP-Rule" id="MF_01699"/>
    </source>
</evidence>
<gene>
    <name evidence="1" type="primary">rutA</name>
    <name type="ordered locus">ECIAI1_1057</name>
</gene>
<protein>
    <recommendedName>
        <fullName evidence="1">Pyrimidine monooxygenase RutA</fullName>
        <ecNumber evidence="1">1.14.99.46</ecNumber>
    </recommendedName>
</protein>
<name>RUTA_ECO8A</name>
<accession>B7M8Z7</accession>
<comment type="function">
    <text evidence="1">Catalyzes the pyrimidine ring opening between N-3 and C-4 by an unusual flavin hydroperoxide-catalyzed mechanism, adding oxygen atoms in the process to yield ureidoacrylate peracid, that immediately reacts with FMN forming ureidoacrylate and FMN-N(5)-oxide. The FMN-N(5)-oxide reacts spontaneously with NADH to produce FMN. Requires the flavin reductase RutF to regenerate FMN in vivo.</text>
</comment>
<comment type="catalytic activity">
    <reaction evidence="1">
        <text>uracil + FMNH2 + NADH + O2 = (Z)-3-ureidoacrylate + FMN + NAD(+) + H2O + H(+)</text>
        <dbReference type="Rhea" id="RHEA:31587"/>
        <dbReference type="ChEBI" id="CHEBI:15377"/>
        <dbReference type="ChEBI" id="CHEBI:15378"/>
        <dbReference type="ChEBI" id="CHEBI:15379"/>
        <dbReference type="ChEBI" id="CHEBI:17568"/>
        <dbReference type="ChEBI" id="CHEBI:57540"/>
        <dbReference type="ChEBI" id="CHEBI:57618"/>
        <dbReference type="ChEBI" id="CHEBI:57945"/>
        <dbReference type="ChEBI" id="CHEBI:58210"/>
        <dbReference type="ChEBI" id="CHEBI:59891"/>
        <dbReference type="EC" id="1.14.99.46"/>
    </reaction>
</comment>
<comment type="catalytic activity">
    <reaction evidence="1">
        <text>thymine + FMNH2 + NADH + O2 = (Z)-2-methylureidoacrylate + FMN + NAD(+) + H2O + H(+)</text>
        <dbReference type="Rhea" id="RHEA:31599"/>
        <dbReference type="ChEBI" id="CHEBI:15377"/>
        <dbReference type="ChEBI" id="CHEBI:15378"/>
        <dbReference type="ChEBI" id="CHEBI:15379"/>
        <dbReference type="ChEBI" id="CHEBI:17821"/>
        <dbReference type="ChEBI" id="CHEBI:57540"/>
        <dbReference type="ChEBI" id="CHEBI:57618"/>
        <dbReference type="ChEBI" id="CHEBI:57945"/>
        <dbReference type="ChEBI" id="CHEBI:58210"/>
        <dbReference type="ChEBI" id="CHEBI:143783"/>
        <dbReference type="EC" id="1.14.99.46"/>
    </reaction>
</comment>
<comment type="induction">
    <text evidence="1">Up-regulated by the nitrogen regulatory protein C (NtrC also called GlnG) and repressed by RutR.</text>
</comment>
<comment type="similarity">
    <text evidence="1">Belongs to the NtaA/SnaA/DszA monooxygenase family. RutA subfamily.</text>
</comment>
<keyword id="KW-0285">Flavoprotein</keyword>
<keyword id="KW-0288">FMN</keyword>
<keyword id="KW-0503">Monooxygenase</keyword>
<keyword id="KW-0521">NADP</keyword>
<keyword id="KW-0560">Oxidoreductase</keyword>
<proteinExistence type="inferred from homology"/>
<organism>
    <name type="scientific">Escherichia coli O8 (strain IAI1)</name>
    <dbReference type="NCBI Taxonomy" id="585034"/>
    <lineage>
        <taxon>Bacteria</taxon>
        <taxon>Pseudomonadati</taxon>
        <taxon>Pseudomonadota</taxon>
        <taxon>Gammaproteobacteria</taxon>
        <taxon>Enterobacterales</taxon>
        <taxon>Enterobacteriaceae</taxon>
        <taxon>Escherichia</taxon>
    </lineage>
</organism>
<sequence length="382" mass="42219">MQDAAPRLTFTLRDEERLMMKIGVFVPIGNNGWLISTHAPQYMPTFELNKAIVQKAEHYHFDFALSMIKLRGFGGKTEFWDHNLESFTLMAGLAAVTSRIQIYATAATLTLPPAIVARMAATIDSISGGRFGVNLVTGWQKPEYEQMGIWPGDDYFSRRYDYLTEYVQVLRDLWGTGKSDFKGDFFTMNDCRVSPQPSVPMKVICAGQSDAGMAFSAQYADFNFCFGKGVNTPTAFAPTAVRMKQAAEQTGRDVGSYVLFMVIADETDDAARAKWEHYKAGADEEALSWLTEQSQKDTRSGTDTNVRQMADPTSAVNINMGTLVGSYASVARMLDEVASVPGAEGVLLTFDDFLSGIETFGERIQPLMQCRAHLPALTQEVA</sequence>
<dbReference type="EC" id="1.14.99.46" evidence="1"/>
<dbReference type="EMBL" id="CU928160">
    <property type="protein sequence ID" value="CAQ97921.1"/>
    <property type="molecule type" value="Genomic_DNA"/>
</dbReference>
<dbReference type="SMR" id="B7M8Z7"/>
<dbReference type="KEGG" id="ecr:ECIAI1_1057"/>
<dbReference type="HOGENOM" id="CLU_027853_1_1_6"/>
<dbReference type="GO" id="GO:0008726">
    <property type="term" value="F:alkanesulfonate monooxygenase activity"/>
    <property type="evidence" value="ECO:0007669"/>
    <property type="project" value="TreeGrafter"/>
</dbReference>
<dbReference type="GO" id="GO:0052614">
    <property type="term" value="F:uracil oxygenase activity"/>
    <property type="evidence" value="ECO:0007669"/>
    <property type="project" value="UniProtKB-EC"/>
</dbReference>
<dbReference type="GO" id="GO:0046306">
    <property type="term" value="P:alkanesulfonate catabolic process"/>
    <property type="evidence" value="ECO:0007669"/>
    <property type="project" value="TreeGrafter"/>
</dbReference>
<dbReference type="GO" id="GO:0019740">
    <property type="term" value="P:nitrogen utilization"/>
    <property type="evidence" value="ECO:0007669"/>
    <property type="project" value="UniProtKB-UniRule"/>
</dbReference>
<dbReference type="GO" id="GO:0006212">
    <property type="term" value="P:uracil catabolic process"/>
    <property type="evidence" value="ECO:0007669"/>
    <property type="project" value="UniProtKB-UniRule"/>
</dbReference>
<dbReference type="CDD" id="cd01094">
    <property type="entry name" value="Alkanesulfonate_monoxygenase"/>
    <property type="match status" value="1"/>
</dbReference>
<dbReference type="FunFam" id="3.20.20.30:FF:000003">
    <property type="entry name" value="Pyrimidine monooxygenase RutA"/>
    <property type="match status" value="1"/>
</dbReference>
<dbReference type="Gene3D" id="3.20.20.30">
    <property type="entry name" value="Luciferase-like domain"/>
    <property type="match status" value="1"/>
</dbReference>
<dbReference type="HAMAP" id="MF_01699">
    <property type="entry name" value="RutA"/>
    <property type="match status" value="1"/>
</dbReference>
<dbReference type="InterPro" id="IPR011251">
    <property type="entry name" value="Luciferase-like_dom"/>
</dbReference>
<dbReference type="InterPro" id="IPR036661">
    <property type="entry name" value="Luciferase-like_sf"/>
</dbReference>
<dbReference type="InterPro" id="IPR019914">
    <property type="entry name" value="Pyrimidine_monooxygenase_RutA"/>
</dbReference>
<dbReference type="InterPro" id="IPR050172">
    <property type="entry name" value="SsuD_RutA_monooxygenase"/>
</dbReference>
<dbReference type="NCBIfam" id="TIGR03612">
    <property type="entry name" value="RutA"/>
    <property type="match status" value="1"/>
</dbReference>
<dbReference type="PANTHER" id="PTHR42847">
    <property type="entry name" value="ALKANESULFONATE MONOOXYGENASE"/>
    <property type="match status" value="1"/>
</dbReference>
<dbReference type="PANTHER" id="PTHR42847:SF4">
    <property type="entry name" value="ALKANESULFONATE MONOOXYGENASE-RELATED"/>
    <property type="match status" value="1"/>
</dbReference>
<dbReference type="Pfam" id="PF00296">
    <property type="entry name" value="Bac_luciferase"/>
    <property type="match status" value="1"/>
</dbReference>
<dbReference type="SUPFAM" id="SSF51679">
    <property type="entry name" value="Bacterial luciferase-like"/>
    <property type="match status" value="1"/>
</dbReference>
<reference key="1">
    <citation type="journal article" date="2009" name="PLoS Genet.">
        <title>Organised genome dynamics in the Escherichia coli species results in highly diverse adaptive paths.</title>
        <authorList>
            <person name="Touchon M."/>
            <person name="Hoede C."/>
            <person name="Tenaillon O."/>
            <person name="Barbe V."/>
            <person name="Baeriswyl S."/>
            <person name="Bidet P."/>
            <person name="Bingen E."/>
            <person name="Bonacorsi S."/>
            <person name="Bouchier C."/>
            <person name="Bouvet O."/>
            <person name="Calteau A."/>
            <person name="Chiapello H."/>
            <person name="Clermont O."/>
            <person name="Cruveiller S."/>
            <person name="Danchin A."/>
            <person name="Diard M."/>
            <person name="Dossat C."/>
            <person name="Karoui M.E."/>
            <person name="Frapy E."/>
            <person name="Garry L."/>
            <person name="Ghigo J.M."/>
            <person name="Gilles A.M."/>
            <person name="Johnson J."/>
            <person name="Le Bouguenec C."/>
            <person name="Lescat M."/>
            <person name="Mangenot S."/>
            <person name="Martinez-Jehanne V."/>
            <person name="Matic I."/>
            <person name="Nassif X."/>
            <person name="Oztas S."/>
            <person name="Petit M.A."/>
            <person name="Pichon C."/>
            <person name="Rouy Z."/>
            <person name="Ruf C.S."/>
            <person name="Schneider D."/>
            <person name="Tourret J."/>
            <person name="Vacherie B."/>
            <person name="Vallenet D."/>
            <person name="Medigue C."/>
            <person name="Rocha E.P.C."/>
            <person name="Denamur E."/>
        </authorList>
    </citation>
    <scope>NUCLEOTIDE SEQUENCE [LARGE SCALE GENOMIC DNA]</scope>
    <source>
        <strain>IAI1</strain>
    </source>
</reference>
<feature type="chain" id="PRO_0000402621" description="Pyrimidine monooxygenase RutA">
    <location>
        <begin position="1"/>
        <end position="382"/>
    </location>
</feature>
<feature type="binding site" evidence="1">
    <location>
        <begin position="68"/>
        <end position="69"/>
    </location>
    <ligand>
        <name>FMN</name>
        <dbReference type="ChEBI" id="CHEBI:58210"/>
    </ligand>
</feature>
<feature type="binding site" evidence="1">
    <location>
        <position position="134"/>
    </location>
    <ligand>
        <name>FMN</name>
        <dbReference type="ChEBI" id="CHEBI:58210"/>
    </ligand>
</feature>
<feature type="binding site" evidence="1">
    <location>
        <position position="143"/>
    </location>
    <ligand>
        <name>FMN</name>
        <dbReference type="ChEBI" id="CHEBI:58210"/>
    </ligand>
</feature>
<feature type="binding site" evidence="1">
    <location>
        <begin position="159"/>
        <end position="160"/>
    </location>
    <ligand>
        <name>FMN</name>
        <dbReference type="ChEBI" id="CHEBI:58210"/>
    </ligand>
</feature>
<feature type="binding site" evidence="1">
    <location>
        <position position="209"/>
    </location>
    <ligand>
        <name>FMN</name>
        <dbReference type="ChEBI" id="CHEBI:58210"/>
    </ligand>
</feature>